<comment type="function">
    <text evidence="1">The branched-chain alpha-keto dehydrogenase complex catalyzes the overall conversion of alpha-keto acids to acyl-CoA and CO(2). It contains multiple copies of three enzymatic components: branched-chain alpha-keto acid decarboxylase (E1), lipoamide acyltransferase (E2) and lipoamide dehydrogenase (E3). Within this complex, the catalytic function of this enzyme is to accept, and to transfer to coenzyme A, acyl groups that are generated by the branched-chain alpha-keto acid decarboxylase component.</text>
</comment>
<comment type="catalytic activity">
    <reaction evidence="1">
        <text>N(6)-[(R)-dihydrolipoyl]-L-lysyl-[protein] + 2-methylpropanoyl-CoA = N(6)-[(R)-S(8)-2-methylpropanoyldihydrolipoyl]-L-lysyl-[protein] + CoA</text>
        <dbReference type="Rhea" id="RHEA:18865"/>
        <dbReference type="Rhea" id="RHEA-COMP:10475"/>
        <dbReference type="Rhea" id="RHEA-COMP:10497"/>
        <dbReference type="ChEBI" id="CHEBI:57287"/>
        <dbReference type="ChEBI" id="CHEBI:57338"/>
        <dbReference type="ChEBI" id="CHEBI:83100"/>
        <dbReference type="ChEBI" id="CHEBI:83142"/>
        <dbReference type="EC" id="2.3.1.168"/>
    </reaction>
    <physiologicalReaction direction="left-to-right" evidence="1">
        <dbReference type="Rhea" id="RHEA:18866"/>
    </physiologicalReaction>
</comment>
<comment type="cofactor">
    <cofactor evidence="1">
        <name>(R)-lipoate</name>
        <dbReference type="ChEBI" id="CHEBI:83088"/>
    </cofactor>
    <text evidence="1">Binds 1 lipoyl cofactor covalently.</text>
</comment>
<comment type="subunit">
    <text evidence="2 12 13 14 18">Forms a 24-polypeptide structural core with octahedral symmetry that represents the E2 component of the branched-chain alpha-ketoacid dehydrogenase (BCKDH) complex. The BCKDH complex is composed of three major building blocks E1, E2 and E3. It is organized around E2, a 24-meric cubic core composed of DBT, to which are associated 6 to 12 copies of E1, and approximately 6 copies of the dehydrogenase E3, a DLD dimer (By similarity) (PubMed:22291014). Interacts with PPM1K with a 24:1 stoichiometry; the N-terminal region (residues 49-61) of PPM1K and C-terminal linker of the lipoyl domain of DBT/E2 (residues 145-160) are critical for this interaction whereas the lipoyl prosthetic group is dispensable. This interaction requires colocalization in mitochondria (PubMed:19411760, PubMed:22291014, PubMed:22589535). PPM1K competes with BCKDK for binding to DBT; this interaction is modulated by branched-chain alpha-keto acids (BCKAs). At steady state, BCKDH holoenzyme preferentially binds BCKDK and BCKDHA is phosphorylated. In response to high levels of BCKAs, BCKDK is replaced by PPM1K leading to BCKDHA dephosphorylation (PubMed:22589535, PubMed:37558654).</text>
</comment>
<comment type="interaction">
    <interactant intactId="EBI-359002">
        <id>P11182</id>
    </interactant>
    <interactant intactId="EBI-21848083">
        <id>Q9Y2D0</id>
        <label>CA5B</label>
    </interactant>
    <organismsDiffer>false</organismsDiffer>
    <experiments>2</experiments>
</comment>
<comment type="interaction">
    <interactant intactId="EBI-359002">
        <id>P11182</id>
    </interactant>
    <interactant intactId="EBI-1056574">
        <id>P13073</id>
        <label>COX4I1</label>
    </interactant>
    <organismsDiffer>false</organismsDiffer>
    <experiments>2</experiments>
</comment>
<comment type="interaction">
    <interactant intactId="EBI-359002">
        <id>P11182</id>
    </interactant>
    <interactant intactId="EBI-13943406">
        <id>Q8TAA5</id>
        <label>GRPEL2</label>
    </interactant>
    <organismsDiffer>false</organismsDiffer>
    <experiments>3</experiments>
</comment>
<comment type="interaction">
    <interactant intactId="EBI-359002">
        <id>P11182</id>
    </interactant>
    <interactant intactId="EBI-7825413">
        <id>Q96EY8</id>
        <label>MMAB</label>
    </interactant>
    <organismsDiffer>false</organismsDiffer>
    <experiments>3</experiments>
</comment>
<comment type="interaction">
    <interactant intactId="EBI-359002">
        <id>P11182</id>
    </interactant>
    <interactant intactId="EBI-2855755">
        <id>Q96E11</id>
        <label>MRRF</label>
    </interactant>
    <organismsDiffer>false</organismsDiffer>
    <experiments>3</experiments>
</comment>
<comment type="subcellular location">
    <subcellularLocation>
        <location evidence="1">Mitochondrion matrix</location>
    </subcellularLocation>
</comment>
<comment type="disease">
    <text evidence="16 19 20">Patients with primary biliary cirrhosis (PBC) show autoantibodies against the E2 component of branched-chain alpha-keto acid dehydrogenase complex. PBC is a chronic, progressive cholestatic liver disease characterized by the presence of antimitochondrial autoantibodies in patients serum. It manifests with inflammatory obliteration of intra-hepatic bile duct, leading to liver cell damage and cirrhosis.</text>
</comment>
<comment type="disease" evidence="11 21">
    <disease id="DI-01935">
        <name>Maple syrup urine disease 2</name>
        <acronym>MSUD2</acronym>
        <description>A form of maple syrup urine disease, an autosomal recessive metabolic disorder due to an enzyme defect in the catabolic pathway of the branched-chain amino acids leucine, isoleucine, and valine. Accumulation of these 3 amino acids and their corresponding keto acids leads to encephalopathy and progressive neurodegeneration. Clinical features include mental and physical retardation, feeding problems, and a maple syrup odor to the urine. The keto acids of the branched-chain amino acids are present in the urine. If untreated, maple syrup urine disease can lead to seizures, coma, and death. The disease is often classified by its pattern of signs and symptoms. The most common and severe form of the disease is the classic type, which becomes apparent soon after birth. Variant forms of the disorder become apparent later in infancy or childhood and are typically milder, but they still involve developmental delay and other medical problems if not treated.</description>
        <dbReference type="MIM" id="620699"/>
    </disease>
    <text>The disease is caused by variants affecting the gene represented in this entry.</text>
</comment>
<comment type="similarity">
    <text evidence="28">Belongs to the 2-oxoacid dehydrogenase family.</text>
</comment>
<comment type="sequence caution" evidence="28">
    <conflict type="erroneous initiation">
        <sequence resource="EMBL-CDS" id="AAA35589"/>
    </conflict>
    <text>Truncated N-terminus.</text>
</comment>
<comment type="sequence caution" evidence="28">
    <conflict type="erroneous initiation">
        <sequence resource="EMBL-CDS" id="AAA64512"/>
    </conflict>
    <text>Truncated N-terminus.</text>
</comment>
<organism>
    <name type="scientific">Homo sapiens</name>
    <name type="common">Human</name>
    <dbReference type="NCBI Taxonomy" id="9606"/>
    <lineage>
        <taxon>Eukaryota</taxon>
        <taxon>Metazoa</taxon>
        <taxon>Chordata</taxon>
        <taxon>Craniata</taxon>
        <taxon>Vertebrata</taxon>
        <taxon>Euteleostomi</taxon>
        <taxon>Mammalia</taxon>
        <taxon>Eutheria</taxon>
        <taxon>Euarchontoglires</taxon>
        <taxon>Primates</taxon>
        <taxon>Haplorrhini</taxon>
        <taxon>Catarrhini</taxon>
        <taxon>Hominidae</taxon>
        <taxon>Homo</taxon>
    </lineage>
</organism>
<keyword id="KW-0002">3D-structure</keyword>
<keyword id="KW-0007">Acetylation</keyword>
<keyword id="KW-0012">Acyltransferase</keyword>
<keyword id="KW-0903">Direct protein sequencing</keyword>
<keyword id="KW-0225">Disease variant</keyword>
<keyword id="KW-0450">Lipoyl</keyword>
<keyword id="KW-0466">Maple syrup urine disease</keyword>
<keyword id="KW-0496">Mitochondrion</keyword>
<keyword id="KW-0597">Phosphoprotein</keyword>
<keyword id="KW-1267">Proteomics identification</keyword>
<keyword id="KW-1185">Reference proteome</keyword>
<keyword id="KW-0808">Transferase</keyword>
<keyword id="KW-0809">Transit peptide</keyword>
<sequence length="482" mass="53517">MAAVRMLRTWSRNAGKLICVRYFQTCGNVHVLKPNYVCFFGYPSFKYSHPHHFLKTTAALRGQVVQFKLSDIGEGIREVTVKEWYVKEGDTVSQFDSICEVQSDKASVTITSRYDGVIKKLYYNLDDIAYVGKPLVDIETEALKDSEEDVVETPAVSHDEHTHQEIKGRKTLATPAVRRLAMENNIKLSEVVGSGKDGRILKEDILNYLEKQTGAILPPSPKVEIMPPPPKPKDMTVPILVSKPPVFTGKDKTEPIKGFQKAMVKTMSAALKIPHFGYCDEIDLTELVKLREELKPIAFARGIKLSFMPFFLKAASLGLLQFPILNASVDENCQNITYKASHNIGIAMDTEQGLIVPNVKNVQICSIFDIATELNRLQKLGSVSQLSTTDLTGGTFTLSNIGSIGGTFAKPVIMPPEVAIGALGSIKAIPRFNQKGEVYKAQIMNVSWSADHRVIDGATMSRFSNLWKSYLENPAFMLLDLK</sequence>
<reference key="1">
    <citation type="journal article" date="1992" name="Biochim. Biophys. Acta">
        <title>The complete cDNA sequence for dihydrolipoyl transacylase (E2) of human branched-chain alpha-keto acid dehydrogenase complex.</title>
        <authorList>
            <person name="Lau K.S."/>
            <person name="Chuang J.L."/>
            <person name="Herring W.J."/>
            <person name="Danner D.J."/>
            <person name="Cox R.P."/>
            <person name="Chuang D.T."/>
        </authorList>
    </citation>
    <scope>NUCLEOTIDE SEQUENCE [MRNA]</scope>
    <scope>VARIANT GLY-384</scope>
    <source>
        <tissue>Kidney</tissue>
    </source>
</reference>
<reference key="2">
    <citation type="journal article" date="1988" name="J. Biol. Chem.">
        <title>Nucleotide sequence of a cDNA for branched chain acyltransferase with analysis of the deduced protein structure.</title>
        <authorList>
            <person name="Hummel K.B."/>
            <person name="Litwer S."/>
            <person name="Bradford A.P."/>
            <person name="Aitken A."/>
            <person name="Danner D.J."/>
            <person name="Yeaman S.J."/>
        </authorList>
    </citation>
    <scope>NUCLEOTIDE SEQUENCE [MRNA]</scope>
    <scope>VARIANT GLY-384</scope>
</reference>
<reference key="3">
    <citation type="journal article" date="1989" name="J. Biol. Chem.">
        <title>Construction and nucleotide sequence of a cDNA encoding the full-length preprotein for human branched chain acyltransferase.</title>
        <authorList>
            <person name="Danner D.J."/>
            <person name="Litwer S."/>
            <person name="Herring W.J."/>
            <person name="Pruckler J."/>
        </authorList>
    </citation>
    <scope>SEQUENCE REVISION</scope>
</reference>
<reference key="4">
    <citation type="journal article" date="1989" name="Biochem. Biophys. Res. Commun.">
        <title>Complete primary structure of the transacylase (E2b) subunit of the human branched chain alpha-keto acid dehydrogenase complex.</title>
        <authorList>
            <person name="Nobukuni Y."/>
            <person name="Mitsubuchi H."/>
            <person name="Endo F."/>
            <person name="Matsuda I."/>
        </authorList>
    </citation>
    <scope>NUCLEOTIDE SEQUENCE [MRNA]</scope>
    <scope>VARIANT GLY-384</scope>
</reference>
<reference key="5">
    <citation type="submission" date="2004-10" db="EMBL/GenBank/DDBJ databases">
        <title>Cloning of human full-length CDSs in BD Creator(TM) system donor vector.</title>
        <authorList>
            <person name="Kalnine N."/>
            <person name="Chen X."/>
            <person name="Rolfs A."/>
            <person name="Halleck A."/>
            <person name="Hines L."/>
            <person name="Eisenstein S."/>
            <person name="Koundinya M."/>
            <person name="Raphael J."/>
            <person name="Moreira D."/>
            <person name="Kelley T."/>
            <person name="LaBaer J."/>
            <person name="Lin Y."/>
            <person name="Phelan M."/>
            <person name="Farmer A."/>
        </authorList>
    </citation>
    <scope>NUCLEOTIDE SEQUENCE [LARGE SCALE MRNA]</scope>
    <scope>VARIANT GLY-384</scope>
</reference>
<reference key="6">
    <citation type="journal article" date="2004" name="Nat. Genet.">
        <title>Complete sequencing and characterization of 21,243 full-length human cDNAs.</title>
        <authorList>
            <person name="Ota T."/>
            <person name="Suzuki Y."/>
            <person name="Nishikawa T."/>
            <person name="Otsuki T."/>
            <person name="Sugiyama T."/>
            <person name="Irie R."/>
            <person name="Wakamatsu A."/>
            <person name="Hayashi K."/>
            <person name="Sato H."/>
            <person name="Nagai K."/>
            <person name="Kimura K."/>
            <person name="Makita H."/>
            <person name="Sekine M."/>
            <person name="Obayashi M."/>
            <person name="Nishi T."/>
            <person name="Shibahara T."/>
            <person name="Tanaka T."/>
            <person name="Ishii S."/>
            <person name="Yamamoto J."/>
            <person name="Saito K."/>
            <person name="Kawai Y."/>
            <person name="Isono Y."/>
            <person name="Nakamura Y."/>
            <person name="Nagahari K."/>
            <person name="Murakami K."/>
            <person name="Yasuda T."/>
            <person name="Iwayanagi T."/>
            <person name="Wagatsuma M."/>
            <person name="Shiratori A."/>
            <person name="Sudo H."/>
            <person name="Hosoiri T."/>
            <person name="Kaku Y."/>
            <person name="Kodaira H."/>
            <person name="Kondo H."/>
            <person name="Sugawara M."/>
            <person name="Takahashi M."/>
            <person name="Kanda K."/>
            <person name="Yokoi T."/>
            <person name="Furuya T."/>
            <person name="Kikkawa E."/>
            <person name="Omura Y."/>
            <person name="Abe K."/>
            <person name="Kamihara K."/>
            <person name="Katsuta N."/>
            <person name="Sato K."/>
            <person name="Tanikawa M."/>
            <person name="Yamazaki M."/>
            <person name="Ninomiya K."/>
            <person name="Ishibashi T."/>
            <person name="Yamashita H."/>
            <person name="Murakawa K."/>
            <person name="Fujimori K."/>
            <person name="Tanai H."/>
            <person name="Kimata M."/>
            <person name="Watanabe M."/>
            <person name="Hiraoka S."/>
            <person name="Chiba Y."/>
            <person name="Ishida S."/>
            <person name="Ono Y."/>
            <person name="Takiguchi S."/>
            <person name="Watanabe S."/>
            <person name="Yosida M."/>
            <person name="Hotuta T."/>
            <person name="Kusano J."/>
            <person name="Kanehori K."/>
            <person name="Takahashi-Fujii A."/>
            <person name="Hara H."/>
            <person name="Tanase T.-O."/>
            <person name="Nomura Y."/>
            <person name="Togiya S."/>
            <person name="Komai F."/>
            <person name="Hara R."/>
            <person name="Takeuchi K."/>
            <person name="Arita M."/>
            <person name="Imose N."/>
            <person name="Musashino K."/>
            <person name="Yuuki H."/>
            <person name="Oshima A."/>
            <person name="Sasaki N."/>
            <person name="Aotsuka S."/>
            <person name="Yoshikawa Y."/>
            <person name="Matsunawa H."/>
            <person name="Ichihara T."/>
            <person name="Shiohata N."/>
            <person name="Sano S."/>
            <person name="Moriya S."/>
            <person name="Momiyama H."/>
            <person name="Satoh N."/>
            <person name="Takami S."/>
            <person name="Terashima Y."/>
            <person name="Suzuki O."/>
            <person name="Nakagawa S."/>
            <person name="Senoh A."/>
            <person name="Mizoguchi H."/>
            <person name="Goto Y."/>
            <person name="Shimizu F."/>
            <person name="Wakebe H."/>
            <person name="Hishigaki H."/>
            <person name="Watanabe T."/>
            <person name="Sugiyama A."/>
            <person name="Takemoto M."/>
            <person name="Kawakami B."/>
            <person name="Yamazaki M."/>
            <person name="Watanabe K."/>
            <person name="Kumagai A."/>
            <person name="Itakura S."/>
            <person name="Fukuzumi Y."/>
            <person name="Fujimori Y."/>
            <person name="Komiyama M."/>
            <person name="Tashiro H."/>
            <person name="Tanigami A."/>
            <person name="Fujiwara T."/>
            <person name="Ono T."/>
            <person name="Yamada K."/>
            <person name="Fujii Y."/>
            <person name="Ozaki K."/>
            <person name="Hirao M."/>
            <person name="Ohmori Y."/>
            <person name="Kawabata A."/>
            <person name="Hikiji T."/>
            <person name="Kobatake N."/>
            <person name="Inagaki H."/>
            <person name="Ikema Y."/>
            <person name="Okamoto S."/>
            <person name="Okitani R."/>
            <person name="Kawakami T."/>
            <person name="Noguchi S."/>
            <person name="Itoh T."/>
            <person name="Shigeta K."/>
            <person name="Senba T."/>
            <person name="Matsumura K."/>
            <person name="Nakajima Y."/>
            <person name="Mizuno T."/>
            <person name="Morinaga M."/>
            <person name="Sasaki M."/>
            <person name="Togashi T."/>
            <person name="Oyama M."/>
            <person name="Hata H."/>
            <person name="Watanabe M."/>
            <person name="Komatsu T."/>
            <person name="Mizushima-Sugano J."/>
            <person name="Satoh T."/>
            <person name="Shirai Y."/>
            <person name="Takahashi Y."/>
            <person name="Nakagawa K."/>
            <person name="Okumura K."/>
            <person name="Nagase T."/>
            <person name="Nomura N."/>
            <person name="Kikuchi H."/>
            <person name="Masuho Y."/>
            <person name="Yamashita R."/>
            <person name="Nakai K."/>
            <person name="Yada T."/>
            <person name="Nakamura Y."/>
            <person name="Ohara O."/>
            <person name="Isogai T."/>
            <person name="Sugano S."/>
        </authorList>
    </citation>
    <scope>NUCLEOTIDE SEQUENCE [LARGE SCALE MRNA]</scope>
    <scope>VARIANT GLY-384</scope>
    <source>
        <tissue>Kidney</tissue>
    </source>
</reference>
<reference key="7">
    <citation type="journal article" date="2006" name="Nature">
        <title>The DNA sequence and biological annotation of human chromosome 1.</title>
        <authorList>
            <person name="Gregory S.G."/>
            <person name="Barlow K.F."/>
            <person name="McLay K.E."/>
            <person name="Kaul R."/>
            <person name="Swarbreck D."/>
            <person name="Dunham A."/>
            <person name="Scott C.E."/>
            <person name="Howe K.L."/>
            <person name="Woodfine K."/>
            <person name="Spencer C.C.A."/>
            <person name="Jones M.C."/>
            <person name="Gillson C."/>
            <person name="Searle S."/>
            <person name="Zhou Y."/>
            <person name="Kokocinski F."/>
            <person name="McDonald L."/>
            <person name="Evans R."/>
            <person name="Phillips K."/>
            <person name="Atkinson A."/>
            <person name="Cooper R."/>
            <person name="Jones C."/>
            <person name="Hall R.E."/>
            <person name="Andrews T.D."/>
            <person name="Lloyd C."/>
            <person name="Ainscough R."/>
            <person name="Almeida J.P."/>
            <person name="Ambrose K.D."/>
            <person name="Anderson F."/>
            <person name="Andrew R.W."/>
            <person name="Ashwell R.I.S."/>
            <person name="Aubin K."/>
            <person name="Babbage A.K."/>
            <person name="Bagguley C.L."/>
            <person name="Bailey J."/>
            <person name="Beasley H."/>
            <person name="Bethel G."/>
            <person name="Bird C.P."/>
            <person name="Bray-Allen S."/>
            <person name="Brown J.Y."/>
            <person name="Brown A.J."/>
            <person name="Buckley D."/>
            <person name="Burton J."/>
            <person name="Bye J."/>
            <person name="Carder C."/>
            <person name="Chapman J.C."/>
            <person name="Clark S.Y."/>
            <person name="Clarke G."/>
            <person name="Clee C."/>
            <person name="Cobley V."/>
            <person name="Collier R.E."/>
            <person name="Corby N."/>
            <person name="Coville G.J."/>
            <person name="Davies J."/>
            <person name="Deadman R."/>
            <person name="Dunn M."/>
            <person name="Earthrowl M."/>
            <person name="Ellington A.G."/>
            <person name="Errington H."/>
            <person name="Frankish A."/>
            <person name="Frankland J."/>
            <person name="French L."/>
            <person name="Garner P."/>
            <person name="Garnett J."/>
            <person name="Gay L."/>
            <person name="Ghori M.R.J."/>
            <person name="Gibson R."/>
            <person name="Gilby L.M."/>
            <person name="Gillett W."/>
            <person name="Glithero R.J."/>
            <person name="Grafham D.V."/>
            <person name="Griffiths C."/>
            <person name="Griffiths-Jones S."/>
            <person name="Grocock R."/>
            <person name="Hammond S."/>
            <person name="Harrison E.S.I."/>
            <person name="Hart E."/>
            <person name="Haugen E."/>
            <person name="Heath P.D."/>
            <person name="Holmes S."/>
            <person name="Holt K."/>
            <person name="Howden P.J."/>
            <person name="Hunt A.R."/>
            <person name="Hunt S.E."/>
            <person name="Hunter G."/>
            <person name="Isherwood J."/>
            <person name="James R."/>
            <person name="Johnson C."/>
            <person name="Johnson D."/>
            <person name="Joy A."/>
            <person name="Kay M."/>
            <person name="Kershaw J.K."/>
            <person name="Kibukawa M."/>
            <person name="Kimberley A.M."/>
            <person name="King A."/>
            <person name="Knights A.J."/>
            <person name="Lad H."/>
            <person name="Laird G."/>
            <person name="Lawlor S."/>
            <person name="Leongamornlert D.A."/>
            <person name="Lloyd D.M."/>
            <person name="Loveland J."/>
            <person name="Lovell J."/>
            <person name="Lush M.J."/>
            <person name="Lyne R."/>
            <person name="Martin S."/>
            <person name="Mashreghi-Mohammadi M."/>
            <person name="Matthews L."/>
            <person name="Matthews N.S.W."/>
            <person name="McLaren S."/>
            <person name="Milne S."/>
            <person name="Mistry S."/>
            <person name="Moore M.J.F."/>
            <person name="Nickerson T."/>
            <person name="O'Dell C.N."/>
            <person name="Oliver K."/>
            <person name="Palmeiri A."/>
            <person name="Palmer S.A."/>
            <person name="Parker A."/>
            <person name="Patel D."/>
            <person name="Pearce A.V."/>
            <person name="Peck A.I."/>
            <person name="Pelan S."/>
            <person name="Phelps K."/>
            <person name="Phillimore B.J."/>
            <person name="Plumb R."/>
            <person name="Rajan J."/>
            <person name="Raymond C."/>
            <person name="Rouse G."/>
            <person name="Saenphimmachak C."/>
            <person name="Sehra H.K."/>
            <person name="Sheridan E."/>
            <person name="Shownkeen R."/>
            <person name="Sims S."/>
            <person name="Skuce C.D."/>
            <person name="Smith M."/>
            <person name="Steward C."/>
            <person name="Subramanian S."/>
            <person name="Sycamore N."/>
            <person name="Tracey A."/>
            <person name="Tromans A."/>
            <person name="Van Helmond Z."/>
            <person name="Wall M."/>
            <person name="Wallis J.M."/>
            <person name="White S."/>
            <person name="Whitehead S.L."/>
            <person name="Wilkinson J.E."/>
            <person name="Willey D.L."/>
            <person name="Williams H."/>
            <person name="Wilming L."/>
            <person name="Wray P.W."/>
            <person name="Wu Z."/>
            <person name="Coulson A."/>
            <person name="Vaudin M."/>
            <person name="Sulston J.E."/>
            <person name="Durbin R.M."/>
            <person name="Hubbard T."/>
            <person name="Wooster R."/>
            <person name="Dunham I."/>
            <person name="Carter N.P."/>
            <person name="McVean G."/>
            <person name="Ross M.T."/>
            <person name="Harrow J."/>
            <person name="Olson M.V."/>
            <person name="Beck S."/>
            <person name="Rogers J."/>
            <person name="Bentley D.R."/>
        </authorList>
    </citation>
    <scope>NUCLEOTIDE SEQUENCE [LARGE SCALE GENOMIC DNA]</scope>
</reference>
<reference key="8">
    <citation type="submission" date="2005-09" db="EMBL/GenBank/DDBJ databases">
        <authorList>
            <person name="Mural R.J."/>
            <person name="Istrail S."/>
            <person name="Sutton G.G."/>
            <person name="Florea L."/>
            <person name="Halpern A.L."/>
            <person name="Mobarry C.M."/>
            <person name="Lippert R."/>
            <person name="Walenz B."/>
            <person name="Shatkay H."/>
            <person name="Dew I."/>
            <person name="Miller J.R."/>
            <person name="Flanigan M.J."/>
            <person name="Edwards N.J."/>
            <person name="Bolanos R."/>
            <person name="Fasulo D."/>
            <person name="Halldorsson B.V."/>
            <person name="Hannenhalli S."/>
            <person name="Turner R."/>
            <person name="Yooseph S."/>
            <person name="Lu F."/>
            <person name="Nusskern D.R."/>
            <person name="Shue B.C."/>
            <person name="Zheng X.H."/>
            <person name="Zhong F."/>
            <person name="Delcher A.L."/>
            <person name="Huson D.H."/>
            <person name="Kravitz S.A."/>
            <person name="Mouchard L."/>
            <person name="Reinert K."/>
            <person name="Remington K.A."/>
            <person name="Clark A.G."/>
            <person name="Waterman M.S."/>
            <person name="Eichler E.E."/>
            <person name="Adams M.D."/>
            <person name="Hunkapiller M.W."/>
            <person name="Myers E.W."/>
            <person name="Venter J.C."/>
        </authorList>
    </citation>
    <scope>NUCLEOTIDE SEQUENCE [LARGE SCALE GENOMIC DNA]</scope>
    <scope>VARIANT GLY-384</scope>
</reference>
<reference key="9">
    <citation type="journal article" date="2004" name="Genome Res.">
        <title>The status, quality, and expansion of the NIH full-length cDNA project: the Mammalian Gene Collection (MGC).</title>
        <authorList>
            <consortium name="The MGC Project Team"/>
        </authorList>
    </citation>
    <scope>NUCLEOTIDE SEQUENCE [LARGE SCALE MRNA]</scope>
    <scope>VARIANT GLY-384</scope>
    <source>
        <tissue>Skin</tissue>
    </source>
</reference>
<reference key="10">
    <citation type="journal article" date="1988" name="Biochemistry">
        <title>Conservation of primary structure in the lipoyl-bearing and dihydrolipoyl dehydrogenase binding domains of mammalian branched-chain alpha-keto acid dehydrogenase complex: molecular cloning of human and bovine transacylase (E2) cDNAs.</title>
        <authorList>
            <person name="Lau K.S."/>
            <person name="Griffin T.A."/>
            <person name="Hu C.-W.C."/>
            <person name="Chuang D.T."/>
        </authorList>
    </citation>
    <scope>NUCLEOTIDE SEQUENCE [MRNA] OF 1-313</scope>
</reference>
<reference key="11">
    <citation type="journal article" date="1992" name="J. Biol. Chem.">
        <title>Structure of the gene encoding dihydrolipoyl transacylase (E2) component of human branched chain alpha-keto acid dehydrogenase complex and characterization of an E2 pseudogene.</title>
        <authorList>
            <person name="Lau K.S."/>
            <person name="Herring W.J."/>
            <person name="Chuang J.L."/>
            <person name="McKean M."/>
            <person name="Danner D.J."/>
            <person name="Cox R.P."/>
            <person name="Chuang D.T."/>
        </authorList>
    </citation>
    <scope>NUCLEOTIDE SEQUENCE [GENOMIC DNA] OF 1-6</scope>
</reference>
<reference key="12">
    <citation type="journal article" date="1994" name="Biochim. Biophys. Acta">
        <title>Differential processing of human and rat E1 alpha precursors of the branched-chain alpha-keto acid dehydrogenase complex caused by an N-terminal proline in the rat sequence.</title>
        <authorList>
            <person name="Wynn R.M."/>
            <person name="Kochi H."/>
            <person name="Cox R.P."/>
            <person name="Chuang D.T."/>
        </authorList>
    </citation>
    <scope>PROTEIN SEQUENCE OF 47-81</scope>
</reference>
<reference key="13">
    <citation type="journal article" date="1989" name="Hepatology">
        <title>Reactivity of primary biliary cirrhosis sera with a human fetal liver cDNA clone of branched-chain alpha-keto acid dehydrogenase dihydrolipoamide acyltransferase, the 52 kD mitochondrial autoantigen.</title>
        <authorList>
            <person name="Surh C.D."/>
            <person name="Danner D.J."/>
            <person name="Ahmed A."/>
            <person name="Coppel R.L."/>
            <person name="Mackay I.R."/>
            <person name="Dickson E.R."/>
            <person name="Gershwin M.E."/>
        </authorList>
    </citation>
    <scope>INVOLVEMENT IN PBC</scope>
</reference>
<reference key="14">
    <citation type="journal article" date="1995" name="Hepatology">
        <title>Autoantibodies to BCOADC-E2 in patients with primary biliary cirrhosis recognize a conformational epitope.</title>
        <authorList>
            <person name="Leung P.S."/>
            <person name="Chuang D.T."/>
            <person name="Wynn R.M."/>
            <person name="Cha S."/>
            <person name="Danner D.J."/>
            <person name="Ansari A."/>
            <person name="Coppel R.L."/>
            <person name="Gershwin M.E."/>
        </authorList>
    </citation>
    <scope>INVOLVEMENT IN PBC</scope>
</reference>
<reference key="15">
    <citation type="journal article" date="1997" name="Hepatology">
        <title>Comparative studies of antimitochondrial autoantibodies in sera and bile in primary biliary cirrhosis.</title>
        <authorList>
            <person name="Nishio A."/>
            <person name="Van de Water J."/>
            <person name="Leung P.S."/>
            <person name="Joplin R."/>
            <person name="Neuberger J.M."/>
            <person name="Lake J."/>
            <person name="Bjoerkland A."/>
            <person name="Toetterman T.H."/>
            <person name="Peters M."/>
            <person name="Worman H.J."/>
            <person name="Ansari A.A."/>
            <person name="Coppel R.L."/>
            <person name="Gershwin M.E."/>
        </authorList>
    </citation>
    <scope>INVOLVEMENT IN PBC</scope>
</reference>
<reference key="16">
    <citation type="journal article" date="2009" name="J. Clin. Invest.">
        <title>Protein phosphatase 2Cm is a critical regulator of branched-chain amino acid catabolism in mice and cultured cells.</title>
        <authorList>
            <person name="Lu G."/>
            <person name="Sun H."/>
            <person name="She P."/>
            <person name="Youn J.Y."/>
            <person name="Warburton S."/>
            <person name="Ping P."/>
            <person name="Vondriska T.M."/>
            <person name="Cai H."/>
            <person name="Lynch C.J."/>
            <person name="Wang Y."/>
        </authorList>
    </citation>
    <scope>INTERACTION WITH PPM1K</scope>
</reference>
<reference key="17">
    <citation type="journal article" date="2009" name="Science">
        <title>Lysine acetylation targets protein complexes and co-regulates major cellular functions.</title>
        <authorList>
            <person name="Choudhary C."/>
            <person name="Kumar C."/>
            <person name="Gnad F."/>
            <person name="Nielsen M.L."/>
            <person name="Rehman M."/>
            <person name="Walther T.C."/>
            <person name="Olsen J.V."/>
            <person name="Mann M."/>
        </authorList>
    </citation>
    <scope>ACETYLATION [LARGE SCALE ANALYSIS] AT LYS-295</scope>
    <scope>IDENTIFICATION BY MASS SPECTROMETRY [LARGE SCALE ANALYSIS]</scope>
</reference>
<reference key="18">
    <citation type="journal article" date="2011" name="BMC Syst. Biol.">
        <title>Initial characterization of the human central proteome.</title>
        <authorList>
            <person name="Burkard T.R."/>
            <person name="Planyavsky M."/>
            <person name="Kaupe I."/>
            <person name="Breitwieser F.P."/>
            <person name="Buerckstuemmer T."/>
            <person name="Bennett K.L."/>
            <person name="Superti-Furga G."/>
            <person name="Colinge J."/>
        </authorList>
    </citation>
    <scope>IDENTIFICATION BY MASS SPECTROMETRY [LARGE SCALE ANALYSIS]</scope>
</reference>
<reference key="19">
    <citation type="journal article" date="2012" name="J. Biol. Chem.">
        <title>Structural and biochemical characterization of human mitochondrial branched-chain alpha-ketoacid dehydrogenase phosphatase.</title>
        <authorList>
            <person name="Wynn R.M."/>
            <person name="Li J."/>
            <person name="Brautigam C.A."/>
            <person name="Chuang J.L."/>
            <person name="Chuang D.T."/>
        </authorList>
    </citation>
    <scope>INTERACTION WITH PPM1K</scope>
    <scope>REGION</scope>
    <scope>MUTAGENESIS OF LYS-105; GLU-147; GLU-148; ASP-149; GLU-152 AND ASP-159</scope>
</reference>
<reference key="20">
    <citation type="journal article" date="2012" name="J. Biol. Chem.">
        <title>Tissue-specific and nutrient regulation of the branched-chain alpha-keto acid dehydrogenase phosphatase, protein phosphatase 2Cm (PP2Cm).</title>
        <authorList>
            <person name="Zhou M."/>
            <person name="Lu G."/>
            <person name="Gao C."/>
            <person name="Wang Y."/>
            <person name="Sun H."/>
        </authorList>
    </citation>
    <scope>INTERACTION WITH PPM1K</scope>
</reference>
<reference key="21">
    <citation type="journal article" date="2014" name="J. Proteomics">
        <title>An enzyme assisted RP-RPLC approach for in-depth analysis of human liver phosphoproteome.</title>
        <authorList>
            <person name="Bian Y."/>
            <person name="Song C."/>
            <person name="Cheng K."/>
            <person name="Dong M."/>
            <person name="Wang F."/>
            <person name="Huang J."/>
            <person name="Sun D."/>
            <person name="Wang L."/>
            <person name="Ye M."/>
            <person name="Zou H."/>
        </authorList>
    </citation>
    <scope>PHOSPHORYLATION [LARGE SCALE ANALYSIS] AT SER-220</scope>
    <scope>IDENTIFICATION BY MASS SPECTROMETRY [LARGE SCALE ANALYSIS]</scope>
    <source>
        <tissue>Liver</tissue>
    </source>
</reference>
<reference key="22">
    <citation type="journal article" date="2015" name="Proteomics">
        <title>N-terminome analysis of the human mitochondrial proteome.</title>
        <authorList>
            <person name="Vaca Jacome A.S."/>
            <person name="Rabilloud T."/>
            <person name="Schaeffer-Reiss C."/>
            <person name="Rompais M."/>
            <person name="Ayoub D."/>
            <person name="Lane L."/>
            <person name="Bairoch A."/>
            <person name="Van Dorsselaer A."/>
            <person name="Carapito C."/>
        </authorList>
    </citation>
    <scope>IDENTIFICATION BY MASS SPECTROMETRY [LARGE SCALE ANALYSIS]</scope>
</reference>
<reference key="23">
    <citation type="journal article" date="2023" name="Nat. Commun.">
        <title>Small molecule branched-chain ketoacid dehydrogenase kinase (BDK) inhibitors with opposing effects on BDK protein levels.</title>
        <authorList>
            <person name="Roth Flach R.J."/>
            <person name="Bollinger E."/>
            <person name="Reyes A.R."/>
            <person name="Laforest B."/>
            <person name="Kormos B.L."/>
            <person name="Liu S."/>
            <person name="Reese M.R."/>
            <person name="Martinez Alsina L.A."/>
            <person name="Buzon L."/>
            <person name="Zhang Y."/>
            <person name="Bechle B."/>
            <person name="Rosado A."/>
            <person name="Sahasrabudhe P.V."/>
            <person name="Knafels J."/>
            <person name="Bhattacharya S.K."/>
            <person name="Omoto K."/>
            <person name="Stansfield J.C."/>
            <person name="Hurley L.D."/>
            <person name="Song L."/>
            <person name="Luo L."/>
            <person name="Breitkopf S.B."/>
            <person name="Monetti M."/>
            <person name="Cunio T."/>
            <person name="Tierney B."/>
            <person name="Geoly F.J."/>
            <person name="Delmore J."/>
            <person name="Siddall C.P."/>
            <person name="Xue L."/>
            <person name="Yip K.N."/>
            <person name="Kalgutkar A.S."/>
            <person name="Miller R.A."/>
            <person name="Zhang B.B."/>
            <person name="Filipski K.J."/>
        </authorList>
    </citation>
    <scope>INTERACTION WITH BCKDK</scope>
</reference>
<reference evidence="30 31" key="24">
    <citation type="journal article" date="2002" name="J. Biol. Chem.">
        <title>Solution structure and dynamics of the lipoic acid-bearing domain of human mitochondrial branched-chain alpha-keto acid dehydrogenase complex.</title>
        <authorList>
            <person name="Chang C.-F."/>
            <person name="Chou H.-T."/>
            <person name="Chuang J.L."/>
            <person name="Chuang D.T."/>
            <person name="Huang T.-H."/>
        </authorList>
    </citation>
    <scope>STRUCTURE BY NMR OF 62-145</scope>
</reference>
<reference evidence="32" key="25">
    <citation type="submission" date="2005-11" db="PDB data bank">
        <title>Solution structure of the E3-binding domain of dihydrolipoamide branched chain transacylase.</title>
        <authorList>
            <consortium name="RIKEN structural genomics initiative (RSGI)"/>
        </authorList>
    </citation>
    <scope>STRUCTURE BY NMR OF 163-220</scope>
</reference>
<reference key="26">
    <citation type="journal article" date="1991" name="Biochem. Biophys. Res. Commun.">
        <title>A 17-bp insertion and a Phe215--&gt;Cys missense mutation in the dihydrolipoyl transacylase (E2) mRNA from a thiamine-responsive maple syrup urine disease patient WG-34.</title>
        <authorList>
            <person name="Fisher C.W."/>
            <person name="Lau K.S."/>
            <person name="Fisher C.R."/>
            <person name="Wynn R.M."/>
            <person name="Cox R.P."/>
            <person name="Chuang D.T."/>
        </authorList>
    </citation>
    <scope>VARIANT MSUD2 CYS-276</scope>
</reference>
<reference key="27">
    <citation type="journal article" date="1998" name="J. Hum. Genet.">
        <title>Molecular basis of intermittent maple syrup urine disease: novel mutations in the E2 gene of the branched-chain alpha-keto acid dehydrogenase complex.</title>
        <authorList>
            <person name="Tsuruta M."/>
            <person name="Mitsubuchi H."/>
            <person name="Mardy S."/>
            <person name="Miura Y."/>
            <person name="Hayashida Y."/>
            <person name="Kinugasa A."/>
            <person name="Ishitsu T."/>
            <person name="Matsuda I."/>
            <person name="Indo Y."/>
        </authorList>
    </citation>
    <scope>VARIANT MSUD2 MET-98</scope>
    <scope>VARIANT GLY-384</scope>
</reference>
<feature type="transit peptide" description="Mitochondrion" evidence="4">
    <location>
        <begin position="1"/>
        <end position="61"/>
    </location>
</feature>
<feature type="chain" id="PRO_0000020489" description="Lipoamide acyltransferase component of branched-chain alpha-keto acid dehydrogenase complex, mitochondrial">
    <location>
        <begin position="62"/>
        <end position="482"/>
    </location>
</feature>
<feature type="domain" description="Lipoyl-binding" evidence="5">
    <location>
        <begin position="64"/>
        <end position="139"/>
    </location>
</feature>
<feature type="domain" description="Peripheral subunit-binding (PSBD)" evidence="6">
    <location>
        <begin position="172"/>
        <end position="209"/>
    </location>
</feature>
<feature type="region of interest" description="Critical for association with PPM1K" evidence="13">
    <location>
        <begin position="145"/>
        <end position="160"/>
    </location>
</feature>
<feature type="region of interest" description="Disordered" evidence="7">
    <location>
        <begin position="147"/>
        <end position="168"/>
    </location>
</feature>
<feature type="compositionally biased region" description="Basic and acidic residues" evidence="7">
    <location>
        <begin position="157"/>
        <end position="168"/>
    </location>
</feature>
<feature type="active site" evidence="4">
    <location>
        <position position="452"/>
    </location>
</feature>
<feature type="active site" evidence="4">
    <location>
        <position position="456"/>
    </location>
</feature>
<feature type="binding site" evidence="1">
    <location>
        <position position="291"/>
    </location>
    <ligand>
        <name>CoA</name>
        <dbReference type="ChEBI" id="CHEBI:57287"/>
    </ligand>
</feature>
<feature type="binding site" evidence="1">
    <location>
        <position position="306"/>
    </location>
    <ligand>
        <name>CoA</name>
        <dbReference type="ChEBI" id="CHEBI:57287"/>
    </ligand>
</feature>
<feature type="binding site" evidence="1">
    <location>
        <position position="349"/>
    </location>
    <ligand>
        <name>CoA</name>
        <dbReference type="ChEBI" id="CHEBI:57287"/>
    </ligand>
</feature>
<feature type="binding site" evidence="1">
    <location>
        <position position="378"/>
    </location>
    <ligand>
        <name>CoA</name>
        <dbReference type="ChEBI" id="CHEBI:57287"/>
    </ligand>
</feature>
<feature type="binding site" evidence="1">
    <location>
        <position position="399"/>
    </location>
    <ligand>
        <name>CoA</name>
        <dbReference type="ChEBI" id="CHEBI:57287"/>
    </ligand>
</feature>
<feature type="binding site" evidence="1">
    <location>
        <position position="400"/>
    </location>
    <ligand>
        <name>CoA</name>
        <dbReference type="ChEBI" id="CHEBI:57287"/>
    </ligand>
</feature>
<feature type="binding site" evidence="1">
    <location>
        <position position="403"/>
    </location>
    <ligand>
        <name>CoA</name>
        <dbReference type="ChEBI" id="CHEBI:57287"/>
    </ligand>
</feature>
<feature type="binding site" evidence="1">
    <location>
        <position position="424"/>
    </location>
    <ligand>
        <name>CoA</name>
        <dbReference type="ChEBI" id="CHEBI:57287"/>
    </ligand>
</feature>
<feature type="binding site" evidence="1">
    <location>
        <position position="426"/>
    </location>
    <ligand>
        <name>CoA</name>
        <dbReference type="ChEBI" id="CHEBI:57287"/>
    </ligand>
</feature>
<feature type="modified residue" description="N6-lipoyllysine" evidence="1 5">
    <location>
        <position position="105"/>
    </location>
</feature>
<feature type="modified residue" description="N6-succinyllysine" evidence="3">
    <location>
        <position position="133"/>
    </location>
</feature>
<feature type="modified residue" description="N6-acetyllysine; alternate" evidence="3">
    <location>
        <position position="196"/>
    </location>
</feature>
<feature type="modified residue" description="N6-succinyllysine; alternate" evidence="3">
    <location>
        <position position="196"/>
    </location>
</feature>
<feature type="modified residue" description="N6-acetyllysine" evidence="3">
    <location>
        <position position="202"/>
    </location>
</feature>
<feature type="modified residue" description="Phosphoserine" evidence="34">
    <location>
        <position position="220"/>
    </location>
</feature>
<feature type="modified residue" description="N6-acetyllysine" evidence="3">
    <location>
        <position position="243"/>
    </location>
</feature>
<feature type="modified residue" description="N6-acetyllysine" evidence="3">
    <location>
        <position position="250"/>
    </location>
</feature>
<feature type="modified residue" description="N6-succinyllysine" evidence="3">
    <location>
        <position position="261"/>
    </location>
</feature>
<feature type="modified residue" description="N6-acetyllysine; alternate" evidence="3">
    <location>
        <position position="289"/>
    </location>
</feature>
<feature type="modified residue" description="N6-succinyllysine; alternate" evidence="3">
    <location>
        <position position="289"/>
    </location>
</feature>
<feature type="modified residue" description="N6-acetyllysine" evidence="33">
    <location>
        <position position="295"/>
    </location>
</feature>
<feature type="modified residue" description="N6-acetyllysine" evidence="3">
    <location>
        <position position="304"/>
    </location>
</feature>
<feature type="modified residue" description="N6-acetyllysine" evidence="3">
    <location>
        <position position="435"/>
    </location>
</feature>
<feature type="modified residue" description="N6-acetyllysine; alternate" evidence="3">
    <location>
        <position position="440"/>
    </location>
</feature>
<feature type="modified residue" description="N6-succinyllysine; alternate" evidence="3">
    <location>
        <position position="440"/>
    </location>
</feature>
<feature type="sequence variant" id="VAR_015099" description="In MSUD2; dbSNP:rs121965001." evidence="21">
    <original>I</original>
    <variation>M</variation>
    <location>
        <position position="98"/>
    </location>
</feature>
<feature type="sequence variant" id="VAR_004978" description="In MSUD2; dbSNP:rs121964999." evidence="11">
    <original>F</original>
    <variation>C</variation>
    <location>
        <position position="276"/>
    </location>
</feature>
<feature type="sequence variant" id="VAR_015100" description="In dbSNP:rs12021720." evidence="8 9 10 15 17 21 22 23">
    <original>S</original>
    <variation>G</variation>
    <location>
        <position position="384"/>
    </location>
</feature>
<feature type="mutagenesis site" description="Abolishes lipoylation but retains normal interaction with PPM1K." evidence="13">
    <original>K</original>
    <variation>A</variation>
    <location>
        <position position="105"/>
    </location>
</feature>
<feature type="mutagenesis site" description="Has no effect on the interaction with PPM1K." evidence="13">
    <original>E</original>
    <variation>A</variation>
    <location>
        <position position="147"/>
    </location>
</feature>
<feature type="mutagenesis site" description="Completely abolishes the interaction with PPM1K." evidence="13">
    <original>E</original>
    <variation>A</variation>
    <location>
        <position position="148"/>
    </location>
</feature>
<feature type="mutagenesis site" description="Completely abolishes the interaction with PPM1K." evidence="13">
    <original>D</original>
    <variation>A</variation>
    <location>
        <position position="149"/>
    </location>
</feature>
<feature type="mutagenesis site" description="Has no effect on the interaction with PPM1K." evidence="13">
    <original>E</original>
    <variation>A</variation>
    <location>
        <position position="152"/>
    </location>
</feature>
<feature type="mutagenesis site" description="Has no effect on the interaction with PPM1K." evidence="13">
    <original>D</original>
    <variation>A</variation>
    <location>
        <position position="159"/>
    </location>
</feature>
<feature type="sequence conflict" description="In Ref. 4; AAA64512." evidence="28" ref="4">
    <original>Q</original>
    <variation>P</variation>
    <location>
        <position position="321"/>
    </location>
</feature>
<feature type="sequence conflict" description="In Ref. 4; AAA64512." evidence="28" ref="4">
    <original>L</original>
    <variation>V</variation>
    <location>
        <position position="354"/>
    </location>
</feature>
<feature type="strand" evidence="35">
    <location>
        <begin position="65"/>
        <end position="68"/>
    </location>
</feature>
<feature type="strand" evidence="35">
    <location>
        <begin position="79"/>
        <end position="84"/>
    </location>
</feature>
<feature type="strand" evidence="35">
    <location>
        <begin position="94"/>
        <end position="96"/>
    </location>
</feature>
<feature type="strand" evidence="35">
    <location>
        <begin position="99"/>
        <end position="102"/>
    </location>
</feature>
<feature type="strand" evidence="35">
    <location>
        <begin position="107"/>
        <end position="109"/>
    </location>
</feature>
<feature type="strand" evidence="35">
    <location>
        <begin position="116"/>
        <end position="121"/>
    </location>
</feature>
<feature type="strand" evidence="36">
    <location>
        <begin position="125"/>
        <end position="129"/>
    </location>
</feature>
<feature type="strand" evidence="35">
    <location>
        <begin position="133"/>
        <end position="139"/>
    </location>
</feature>
<feature type="helix" evidence="37">
    <location>
        <begin position="175"/>
        <end position="183"/>
    </location>
</feature>
<feature type="helix" evidence="37">
    <location>
        <begin position="188"/>
        <end position="190"/>
    </location>
</feature>
<feature type="helix" evidence="37">
    <location>
        <begin position="196"/>
        <end position="198"/>
    </location>
</feature>
<feature type="helix" evidence="37">
    <location>
        <begin position="202"/>
        <end position="213"/>
    </location>
</feature>
<accession>P11182</accession>
<accession>B2R811</accession>
<accession>Q5VVL8</accession>
<evidence type="ECO:0000250" key="1">
    <source>
        <dbReference type="UniProtKB" id="P11181"/>
    </source>
</evidence>
<evidence type="ECO:0000250" key="2">
    <source>
        <dbReference type="UniProtKB" id="P12694"/>
    </source>
</evidence>
<evidence type="ECO:0000250" key="3">
    <source>
        <dbReference type="UniProtKB" id="P53395"/>
    </source>
</evidence>
<evidence type="ECO:0000255" key="4"/>
<evidence type="ECO:0000255" key="5">
    <source>
        <dbReference type="PROSITE-ProRule" id="PRU01066"/>
    </source>
</evidence>
<evidence type="ECO:0000255" key="6">
    <source>
        <dbReference type="PROSITE-ProRule" id="PRU01170"/>
    </source>
</evidence>
<evidence type="ECO:0000256" key="7">
    <source>
        <dbReference type="SAM" id="MobiDB-lite"/>
    </source>
</evidence>
<evidence type="ECO:0000269" key="8">
    <source>
    </source>
</evidence>
<evidence type="ECO:0000269" key="9">
    <source>
    </source>
</evidence>
<evidence type="ECO:0000269" key="10">
    <source>
    </source>
</evidence>
<evidence type="ECO:0000269" key="11">
    <source>
    </source>
</evidence>
<evidence type="ECO:0000269" key="12">
    <source>
    </source>
</evidence>
<evidence type="ECO:0000269" key="13">
    <source>
    </source>
</evidence>
<evidence type="ECO:0000269" key="14">
    <source>
    </source>
</evidence>
<evidence type="ECO:0000269" key="15">
    <source>
    </source>
</evidence>
<evidence type="ECO:0000269" key="16">
    <source>
    </source>
</evidence>
<evidence type="ECO:0000269" key="17">
    <source>
    </source>
</evidence>
<evidence type="ECO:0000269" key="18">
    <source>
    </source>
</evidence>
<evidence type="ECO:0000269" key="19">
    <source>
    </source>
</evidence>
<evidence type="ECO:0000269" key="20">
    <source>
    </source>
</evidence>
<evidence type="ECO:0000269" key="21">
    <source>
    </source>
</evidence>
<evidence type="ECO:0000269" key="22">
    <source ref="5"/>
</evidence>
<evidence type="ECO:0000269" key="23">
    <source ref="8"/>
</evidence>
<evidence type="ECO:0000303" key="24">
    <source>
    </source>
</evidence>
<evidence type="ECO:0000303" key="25">
    <source>
    </source>
</evidence>
<evidence type="ECO:0000303" key="26">
    <source>
    </source>
</evidence>
<evidence type="ECO:0000303" key="27">
    <source>
    </source>
</evidence>
<evidence type="ECO:0000305" key="28"/>
<evidence type="ECO:0000312" key="29">
    <source>
        <dbReference type="HGNC" id="HGNC:2698"/>
    </source>
</evidence>
<evidence type="ECO:0007744" key="30">
    <source>
        <dbReference type="PDB" id="1K8M"/>
    </source>
</evidence>
<evidence type="ECO:0007744" key="31">
    <source>
        <dbReference type="PDB" id="1K8O"/>
    </source>
</evidence>
<evidence type="ECO:0007744" key="32">
    <source>
        <dbReference type="PDB" id="2COO"/>
    </source>
</evidence>
<evidence type="ECO:0007744" key="33">
    <source>
    </source>
</evidence>
<evidence type="ECO:0007744" key="34">
    <source>
    </source>
</evidence>
<evidence type="ECO:0007829" key="35">
    <source>
        <dbReference type="PDB" id="1K8M"/>
    </source>
</evidence>
<evidence type="ECO:0007829" key="36">
    <source>
        <dbReference type="PDB" id="1K8O"/>
    </source>
</evidence>
<evidence type="ECO:0007829" key="37">
    <source>
        <dbReference type="PDB" id="3RNM"/>
    </source>
</evidence>
<dbReference type="EC" id="2.3.1.168" evidence="1"/>
<dbReference type="EMBL" id="X66785">
    <property type="protein sequence ID" value="CAA47285.1"/>
    <property type="molecule type" value="mRNA"/>
</dbReference>
<dbReference type="EMBL" id="J03208">
    <property type="protein sequence ID" value="AAA35589.1"/>
    <property type="status" value="ALT_INIT"/>
    <property type="molecule type" value="mRNA"/>
</dbReference>
<dbReference type="EMBL" id="M27093">
    <property type="protein sequence ID" value="AAA64512.1"/>
    <property type="status" value="ALT_INIT"/>
    <property type="molecule type" value="mRNA"/>
</dbReference>
<dbReference type="EMBL" id="BT007372">
    <property type="protein sequence ID" value="AAP36036.1"/>
    <property type="molecule type" value="mRNA"/>
</dbReference>
<dbReference type="EMBL" id="AL445928">
    <property type="status" value="NOT_ANNOTATED_CDS"/>
    <property type="molecule type" value="Genomic_DNA"/>
</dbReference>
<dbReference type="EMBL" id="AK313191">
    <property type="protein sequence ID" value="BAG36008.1"/>
    <property type="molecule type" value="mRNA"/>
</dbReference>
<dbReference type="EMBL" id="CH471097">
    <property type="protein sequence ID" value="EAW72963.1"/>
    <property type="molecule type" value="Genomic_DNA"/>
</dbReference>
<dbReference type="EMBL" id="BC016675">
    <property type="protein sequence ID" value="AAH16675.1"/>
    <property type="molecule type" value="mRNA"/>
</dbReference>
<dbReference type="EMBL" id="M19301">
    <property type="protein sequence ID" value="AAA59200.1"/>
    <property type="status" value="ALT_SEQ"/>
    <property type="molecule type" value="mRNA"/>
</dbReference>
<dbReference type="EMBL" id="X68104">
    <property type="protein sequence ID" value="CAA48225.1"/>
    <property type="molecule type" value="Genomic_DNA"/>
</dbReference>
<dbReference type="CCDS" id="CCDS767.1"/>
<dbReference type="PIR" id="A32422">
    <property type="entry name" value="A32422"/>
</dbReference>
<dbReference type="RefSeq" id="NP_001909.4">
    <property type="nucleotide sequence ID" value="NM_001918.5"/>
</dbReference>
<dbReference type="PDB" id="1K8M">
    <property type="method" value="NMR"/>
    <property type="chains" value="A=62-145"/>
</dbReference>
<dbReference type="PDB" id="1K8O">
    <property type="method" value="NMR"/>
    <property type="chains" value="A=62-145"/>
</dbReference>
<dbReference type="PDB" id="1ZWV">
    <property type="method" value="NMR"/>
    <property type="chains" value="A=165-213"/>
</dbReference>
<dbReference type="PDB" id="2COO">
    <property type="method" value="NMR"/>
    <property type="chains" value="A=163-220"/>
</dbReference>
<dbReference type="PDB" id="3RNM">
    <property type="method" value="X-ray"/>
    <property type="resolution" value="2.40 A"/>
    <property type="chains" value="E/F=165-213"/>
</dbReference>
<dbReference type="PDBsum" id="1K8M"/>
<dbReference type="PDBsum" id="1K8O"/>
<dbReference type="PDBsum" id="1ZWV"/>
<dbReference type="PDBsum" id="2COO"/>
<dbReference type="PDBsum" id="3RNM"/>
<dbReference type="BMRB" id="P11182"/>
<dbReference type="SMR" id="P11182"/>
<dbReference type="BioGRID" id="107997">
    <property type="interactions" value="209"/>
</dbReference>
<dbReference type="ComplexPortal" id="CPX-2216">
    <property type="entry name" value="Mitochondrial 2-oxoisovalerate dehydrogenase complex"/>
</dbReference>
<dbReference type="FunCoup" id="P11182">
    <property type="interactions" value="2321"/>
</dbReference>
<dbReference type="IntAct" id="P11182">
    <property type="interactions" value="121"/>
</dbReference>
<dbReference type="MINT" id="P11182"/>
<dbReference type="STRING" id="9606.ENSP00000359151"/>
<dbReference type="GlyGen" id="P11182">
    <property type="glycosylation" value="1 site, 1 O-linked glycan (1 site)"/>
</dbReference>
<dbReference type="iPTMnet" id="P11182"/>
<dbReference type="MetOSite" id="P11182"/>
<dbReference type="PhosphoSitePlus" id="P11182"/>
<dbReference type="SwissPalm" id="P11182"/>
<dbReference type="BioMuta" id="DBT"/>
<dbReference type="DMDM" id="400668"/>
<dbReference type="jPOST" id="P11182"/>
<dbReference type="MassIVE" id="P11182"/>
<dbReference type="PaxDb" id="9606-ENSP00000359151"/>
<dbReference type="PeptideAtlas" id="P11182"/>
<dbReference type="ProteomicsDB" id="52718"/>
<dbReference type="Pumba" id="P11182"/>
<dbReference type="ABCD" id="P11182">
    <property type="antibodies" value="1 sequenced antibody"/>
</dbReference>
<dbReference type="Antibodypedia" id="19986">
    <property type="antibodies" value="189 antibodies from 25 providers"/>
</dbReference>
<dbReference type="DNASU" id="1629"/>
<dbReference type="Ensembl" id="ENST00000370132.8">
    <property type="protein sequence ID" value="ENSP00000359151.3"/>
    <property type="gene ID" value="ENSG00000137992.15"/>
</dbReference>
<dbReference type="GeneID" id="1629"/>
<dbReference type="KEGG" id="hsa:1629"/>
<dbReference type="MANE-Select" id="ENST00000370132.8">
    <property type="protein sequence ID" value="ENSP00000359151.3"/>
    <property type="RefSeq nucleotide sequence ID" value="NM_001918.5"/>
    <property type="RefSeq protein sequence ID" value="NP_001909.4"/>
</dbReference>
<dbReference type="UCSC" id="uc001dta.4">
    <property type="organism name" value="human"/>
</dbReference>
<dbReference type="AGR" id="HGNC:2698"/>
<dbReference type="CTD" id="1629"/>
<dbReference type="DisGeNET" id="1629"/>
<dbReference type="GeneCards" id="DBT"/>
<dbReference type="GeneReviews" id="DBT"/>
<dbReference type="HGNC" id="HGNC:2698">
    <property type="gene designation" value="DBT"/>
</dbReference>
<dbReference type="HPA" id="ENSG00000137992">
    <property type="expression patterns" value="Low tissue specificity"/>
</dbReference>
<dbReference type="MalaCards" id="DBT"/>
<dbReference type="MIM" id="248600">
    <property type="type" value="phenotype"/>
</dbReference>
<dbReference type="MIM" id="248610">
    <property type="type" value="gene"/>
</dbReference>
<dbReference type="MIM" id="620699">
    <property type="type" value="phenotype"/>
</dbReference>
<dbReference type="neXtProt" id="NX_P11182"/>
<dbReference type="OpenTargets" id="ENSG00000137992"/>
<dbReference type="Orphanet" id="268145">
    <property type="disease" value="Classic maple syrup urine disease"/>
</dbReference>
<dbReference type="Orphanet" id="268162">
    <property type="disease" value="Intermediate maple syrup urine disease"/>
</dbReference>
<dbReference type="Orphanet" id="268173">
    <property type="disease" value="Intermittent maple syrup urine disease"/>
</dbReference>
<dbReference type="Orphanet" id="268184">
    <property type="disease" value="Thiamine-responsive maple syrup urine disease"/>
</dbReference>
<dbReference type="PharmGKB" id="PA27167"/>
<dbReference type="VEuPathDB" id="HostDB:ENSG00000137992"/>
<dbReference type="eggNOG" id="KOG0558">
    <property type="taxonomic scope" value="Eukaryota"/>
</dbReference>
<dbReference type="GeneTree" id="ENSGT00940000156750"/>
<dbReference type="HOGENOM" id="CLU_016733_10_0_1"/>
<dbReference type="InParanoid" id="P11182"/>
<dbReference type="OMA" id="MPFCIKA"/>
<dbReference type="OrthoDB" id="202158at2759"/>
<dbReference type="PAN-GO" id="P11182">
    <property type="GO annotations" value="4 GO annotations based on evolutionary models"/>
</dbReference>
<dbReference type="PhylomeDB" id="P11182"/>
<dbReference type="TreeFam" id="TF314182"/>
<dbReference type="BioCyc" id="MetaCyc:MONOMER-12007"/>
<dbReference type="BRENDA" id="2.3.1.168">
    <property type="organism ID" value="2681"/>
</dbReference>
<dbReference type="PathwayCommons" id="P11182"/>
<dbReference type="Reactome" id="R-HSA-70895">
    <property type="pathway name" value="Branched-chain amino acid catabolism"/>
</dbReference>
<dbReference type="Reactome" id="R-HSA-9013407">
    <property type="pathway name" value="RHOH GTPase cycle"/>
</dbReference>
<dbReference type="Reactome" id="R-HSA-9837999">
    <property type="pathway name" value="Mitochondrial protein degradation"/>
</dbReference>
<dbReference type="Reactome" id="R-HSA-9857492">
    <property type="pathway name" value="Protein lipoylation"/>
</dbReference>
<dbReference type="Reactome" id="R-HSA-9859138">
    <property type="pathway name" value="BCKDH synthesizes BCAA-CoA from KIC, KMVA, KIV"/>
</dbReference>
<dbReference type="Reactome" id="R-HSA-9865113">
    <property type="pathway name" value="Loss-of-function mutations in DBT cause MSUD2"/>
</dbReference>
<dbReference type="Reactome" id="R-HSA-9865125">
    <property type="pathway name" value="Loss-of-function mutations in BCKDHA or BCKDHB cause MSUD"/>
</dbReference>
<dbReference type="Reactome" id="R-HSA-9907570">
    <property type="pathway name" value="Loss-of-function mutations in DLD cause MSUD3/DLDD"/>
</dbReference>
<dbReference type="Reactome" id="R-HSA-9912481">
    <property type="pathway name" value="Branched-chain ketoacid dehydrogenase kinase deficiency"/>
</dbReference>
<dbReference type="Reactome" id="R-HSA-9912529">
    <property type="pathway name" value="H139Hfs13* PPM1K causes a mild variant of MSUD"/>
</dbReference>
<dbReference type="SABIO-RK" id="P11182"/>
<dbReference type="SignaLink" id="P11182"/>
<dbReference type="BioGRID-ORCS" id="1629">
    <property type="hits" value="16 hits in 1162 CRISPR screens"/>
</dbReference>
<dbReference type="CD-CODE" id="FB4E32DD">
    <property type="entry name" value="Presynaptic clusters and postsynaptic densities"/>
</dbReference>
<dbReference type="ChiTaRS" id="DBT">
    <property type="organism name" value="human"/>
</dbReference>
<dbReference type="EvolutionaryTrace" id="P11182"/>
<dbReference type="GeneWiki" id="DBT_(gene)"/>
<dbReference type="GenomeRNAi" id="1629"/>
<dbReference type="Pharos" id="P11182">
    <property type="development level" value="Tbio"/>
</dbReference>
<dbReference type="PRO" id="PR:P11182"/>
<dbReference type="Proteomes" id="UP000005640">
    <property type="component" value="Chromosome 1"/>
</dbReference>
<dbReference type="RNAct" id="P11182">
    <property type="molecule type" value="protein"/>
</dbReference>
<dbReference type="Bgee" id="ENSG00000137992">
    <property type="expression patterns" value="Expressed in buccal mucosa cell and 210 other cell types or tissues"/>
</dbReference>
<dbReference type="ExpressionAtlas" id="P11182">
    <property type="expression patterns" value="baseline and differential"/>
</dbReference>
<dbReference type="GO" id="GO:0160157">
    <property type="term" value="C:branched-chain alpha-ketoacid dehydrogenase complex"/>
    <property type="evidence" value="ECO:0000353"/>
    <property type="project" value="ComplexPortal"/>
</dbReference>
<dbReference type="GO" id="GO:0005737">
    <property type="term" value="C:cytoplasm"/>
    <property type="evidence" value="ECO:0000318"/>
    <property type="project" value="GO_Central"/>
</dbReference>
<dbReference type="GO" id="GO:0005829">
    <property type="term" value="C:cytosol"/>
    <property type="evidence" value="ECO:0000314"/>
    <property type="project" value="HPA"/>
</dbReference>
<dbReference type="GO" id="GO:0015630">
    <property type="term" value="C:microtubule cytoskeleton"/>
    <property type="evidence" value="ECO:0000314"/>
    <property type="project" value="HPA"/>
</dbReference>
<dbReference type="GO" id="GO:0005759">
    <property type="term" value="C:mitochondrial matrix"/>
    <property type="evidence" value="ECO:0000304"/>
    <property type="project" value="Reactome"/>
</dbReference>
<dbReference type="GO" id="GO:0042645">
    <property type="term" value="C:mitochondrial nucleoid"/>
    <property type="evidence" value="ECO:0000314"/>
    <property type="project" value="BHF-UCL"/>
</dbReference>
<dbReference type="GO" id="GO:0005739">
    <property type="term" value="C:mitochondrion"/>
    <property type="evidence" value="ECO:0000314"/>
    <property type="project" value="HPA"/>
</dbReference>
<dbReference type="GO" id="GO:0045252">
    <property type="term" value="C:oxoglutarate dehydrogenase complex"/>
    <property type="evidence" value="ECO:0000304"/>
    <property type="project" value="ProtInc"/>
</dbReference>
<dbReference type="GO" id="GO:0016407">
    <property type="term" value="F:acetyltransferase activity"/>
    <property type="evidence" value="ECO:0000318"/>
    <property type="project" value="GO_Central"/>
</dbReference>
<dbReference type="GO" id="GO:0016747">
    <property type="term" value="F:acyltransferase activity, transferring groups other than amino-acyl groups"/>
    <property type="evidence" value="ECO:0000304"/>
    <property type="project" value="Reactome"/>
</dbReference>
<dbReference type="GO" id="GO:0043754">
    <property type="term" value="F:dihydrolipoyllysine-residue (2-methylpropanoyl)transferase activity"/>
    <property type="evidence" value="ECO:0007669"/>
    <property type="project" value="UniProtKB-EC"/>
</dbReference>
<dbReference type="GO" id="GO:0031405">
    <property type="term" value="F:lipoic acid binding"/>
    <property type="evidence" value="ECO:0000318"/>
    <property type="project" value="GO_Central"/>
</dbReference>
<dbReference type="GO" id="GO:0031625">
    <property type="term" value="F:ubiquitin protein ligase binding"/>
    <property type="evidence" value="ECO:0000353"/>
    <property type="project" value="ParkinsonsUK-UCL"/>
</dbReference>
<dbReference type="GO" id="GO:0009083">
    <property type="term" value="P:branched-chain amino acid catabolic process"/>
    <property type="evidence" value="ECO:0000314"/>
    <property type="project" value="ComplexPortal"/>
</dbReference>
<dbReference type="CDD" id="cd06849">
    <property type="entry name" value="lipoyl_domain"/>
    <property type="match status" value="1"/>
</dbReference>
<dbReference type="FunFam" id="2.40.50.100:FF:000013">
    <property type="entry name" value="Dihydrolipoamide acetyltransferase component of pyruvate dehydrogenase complex"/>
    <property type="match status" value="1"/>
</dbReference>
<dbReference type="FunFam" id="3.30.559.10:FF:000009">
    <property type="entry name" value="Dihydrolipoamide acetyltransferase component of pyruvate dehydrogenase complex"/>
    <property type="match status" value="1"/>
</dbReference>
<dbReference type="FunFam" id="4.10.320.10:FF:000002">
    <property type="entry name" value="Dihydrolipoamide acetyltransferase component of pyruvate dehydrogenase complex"/>
    <property type="match status" value="1"/>
</dbReference>
<dbReference type="Gene3D" id="2.40.50.100">
    <property type="match status" value="1"/>
</dbReference>
<dbReference type="Gene3D" id="3.30.559.10">
    <property type="entry name" value="Chloramphenicol acetyltransferase-like domain"/>
    <property type="match status" value="1"/>
</dbReference>
<dbReference type="Gene3D" id="4.10.320.10">
    <property type="entry name" value="E3-binding domain"/>
    <property type="match status" value="1"/>
</dbReference>
<dbReference type="InterPro" id="IPR003016">
    <property type="entry name" value="2-oxoA_DH_lipoyl-BS"/>
</dbReference>
<dbReference type="InterPro" id="IPR001078">
    <property type="entry name" value="2-oxoacid_DH_actylTfrase"/>
</dbReference>
<dbReference type="InterPro" id="IPR050743">
    <property type="entry name" value="2-oxoacid_DH_E2_comp"/>
</dbReference>
<dbReference type="InterPro" id="IPR000089">
    <property type="entry name" value="Biotin_lipoyl"/>
</dbReference>
<dbReference type="InterPro" id="IPR023213">
    <property type="entry name" value="CAT-like_dom_sf"/>
</dbReference>
<dbReference type="InterPro" id="IPR036625">
    <property type="entry name" value="E3-bd_dom_sf"/>
</dbReference>
<dbReference type="InterPro" id="IPR004167">
    <property type="entry name" value="PSBD"/>
</dbReference>
<dbReference type="InterPro" id="IPR011053">
    <property type="entry name" value="Single_hybrid_motif"/>
</dbReference>
<dbReference type="PANTHER" id="PTHR43178">
    <property type="entry name" value="DIHYDROLIPOAMIDE ACETYLTRANSFERASE COMPONENT OF PYRUVATE DEHYDROGENASE COMPLEX"/>
    <property type="match status" value="1"/>
</dbReference>
<dbReference type="PANTHER" id="PTHR43178:SF5">
    <property type="entry name" value="LIPOAMIDE ACYLTRANSFERASE COMPONENT OF BRANCHED-CHAIN ALPHA-KETO ACID DEHYDROGENASE COMPLEX, MITOCHONDRIAL"/>
    <property type="match status" value="1"/>
</dbReference>
<dbReference type="Pfam" id="PF00198">
    <property type="entry name" value="2-oxoacid_dh"/>
    <property type="match status" value="1"/>
</dbReference>
<dbReference type="Pfam" id="PF00364">
    <property type="entry name" value="Biotin_lipoyl"/>
    <property type="match status" value="1"/>
</dbReference>
<dbReference type="Pfam" id="PF02817">
    <property type="entry name" value="E3_binding"/>
    <property type="match status" value="1"/>
</dbReference>
<dbReference type="SUPFAM" id="SSF52777">
    <property type="entry name" value="CoA-dependent acyltransferases"/>
    <property type="match status" value="1"/>
</dbReference>
<dbReference type="SUPFAM" id="SSF47005">
    <property type="entry name" value="Peripheral subunit-binding domain of 2-oxo acid dehydrogenase complex"/>
    <property type="match status" value="1"/>
</dbReference>
<dbReference type="SUPFAM" id="SSF51230">
    <property type="entry name" value="Single hybrid motif"/>
    <property type="match status" value="1"/>
</dbReference>
<dbReference type="PROSITE" id="PS50968">
    <property type="entry name" value="BIOTINYL_LIPOYL"/>
    <property type="match status" value="1"/>
</dbReference>
<dbReference type="PROSITE" id="PS00189">
    <property type="entry name" value="LIPOYL"/>
    <property type="match status" value="1"/>
</dbReference>
<dbReference type="PROSITE" id="PS51826">
    <property type="entry name" value="PSBD"/>
    <property type="match status" value="1"/>
</dbReference>
<proteinExistence type="evidence at protein level"/>
<protein>
    <recommendedName>
        <fullName evidence="28">Lipoamide acyltransferase component of branched-chain alpha-keto acid dehydrogenase complex, mitochondrial</fullName>
        <ecNumber evidence="1">2.3.1.168</ecNumber>
    </recommendedName>
    <alternativeName>
        <fullName evidence="24">52 kDa mitochondrial autoantigen of primary biliary cirrhosis</fullName>
    </alternativeName>
    <alternativeName>
        <fullName evidence="26 27">Branched chain 2-oxo-acid dehydrogenase complex component E2</fullName>
        <shortName evidence="26 27">BCOADC-E2</shortName>
    </alternativeName>
    <alternativeName>
        <fullName>Branched-chain alpha-keto acid dehydrogenase complex component E2</fullName>
        <shortName>BCKAD-E2</shortName>
        <shortName>BCKADE2</shortName>
        <shortName evidence="25">BCKDH-E2</shortName>
    </alternativeName>
    <alternativeName>
        <fullName>Dihydrolipoamide acetyltransferase component of branched-chain alpha-keto acid dehydrogenase complex</fullName>
    </alternativeName>
    <alternativeName>
        <fullName>Dihydrolipoamide branched chain transacylase</fullName>
    </alternativeName>
    <alternativeName>
        <fullName>Dihydrolipoyllysine-residue (2-methylpropanoyl)transferase</fullName>
    </alternativeName>
</protein>
<gene>
    <name evidence="29" type="primary">DBT</name>
    <name type="synonym">BCATE2</name>
    <name evidence="25" type="synonym">BCKDHE2</name>
</gene>
<name>ODB2_HUMAN</name>